<accession>B0TTD5</accession>
<comment type="function">
    <text evidence="1">With CysN forms the ATP sulfurylase (ATPS) that catalyzes the adenylation of sulfate producing adenosine 5'-phosphosulfate (APS) and diphosphate, the first enzymatic step in sulfur assimilation pathway. APS synthesis involves the formation of a high-energy phosphoric-sulfuric acid anhydride bond driven by GTP hydrolysis by CysN coupled to ATP hydrolysis by CysD.</text>
</comment>
<comment type="catalytic activity">
    <reaction evidence="1">
        <text>sulfate + ATP + H(+) = adenosine 5'-phosphosulfate + diphosphate</text>
        <dbReference type="Rhea" id="RHEA:18133"/>
        <dbReference type="ChEBI" id="CHEBI:15378"/>
        <dbReference type="ChEBI" id="CHEBI:16189"/>
        <dbReference type="ChEBI" id="CHEBI:30616"/>
        <dbReference type="ChEBI" id="CHEBI:33019"/>
        <dbReference type="ChEBI" id="CHEBI:58243"/>
        <dbReference type="EC" id="2.7.7.4"/>
    </reaction>
</comment>
<comment type="pathway">
    <text evidence="1">Sulfur metabolism; hydrogen sulfide biosynthesis; sulfite from sulfate: step 1/3.</text>
</comment>
<comment type="subunit">
    <text evidence="1">Heterodimer composed of CysD, the smaller subunit, and CysN.</text>
</comment>
<comment type="similarity">
    <text evidence="1">Belongs to the PAPS reductase family. CysD subfamily.</text>
</comment>
<sequence length="302" mass="35097">MAAKELSHLQQLEAESIQIIREVAAEFDNPVMMYSIGKDSSVMLHLARKAFYPGKIPFPLLHVDTDWKFKEMIAFRDEQAKEFGFELLVHKNPEGLEMGISPFEHGSAKHTDIMKTQGLKQALNKYGFDAAFGGARRDEEKSRAKERVYSFRDKHHTWDPKNQRPELWRTYNGAVNKGESIRVFPLSNWTELDIWQYIYQENIQLVPLYFAQKRPVVERDGMMIMVDDDRMPLAEGEQPKQELVRFRTLGCYPLTGAMHSEADTLEKIIEEMLLTRSSERQGRLIDSDQSASMELKKRQGYF</sequence>
<protein>
    <recommendedName>
        <fullName evidence="1">Sulfate adenylyltransferase subunit 2</fullName>
        <ecNumber evidence="1">2.7.7.4</ecNumber>
    </recommendedName>
    <alternativeName>
        <fullName evidence="1">ATP-sulfurylase small subunit</fullName>
    </alternativeName>
    <alternativeName>
        <fullName evidence="1">Sulfate adenylate transferase</fullName>
        <shortName evidence="1">SAT</shortName>
    </alternativeName>
</protein>
<gene>
    <name evidence="1" type="primary">cysD</name>
    <name type="ordered locus">Shal_3533</name>
</gene>
<evidence type="ECO:0000255" key="1">
    <source>
        <dbReference type="HAMAP-Rule" id="MF_00064"/>
    </source>
</evidence>
<name>CYSD_SHEHH</name>
<organism>
    <name type="scientific">Shewanella halifaxensis (strain HAW-EB4)</name>
    <dbReference type="NCBI Taxonomy" id="458817"/>
    <lineage>
        <taxon>Bacteria</taxon>
        <taxon>Pseudomonadati</taxon>
        <taxon>Pseudomonadota</taxon>
        <taxon>Gammaproteobacteria</taxon>
        <taxon>Alteromonadales</taxon>
        <taxon>Shewanellaceae</taxon>
        <taxon>Shewanella</taxon>
    </lineage>
</organism>
<dbReference type="EC" id="2.7.7.4" evidence="1"/>
<dbReference type="EMBL" id="CP000931">
    <property type="protein sequence ID" value="ABZ78076.1"/>
    <property type="molecule type" value="Genomic_DNA"/>
</dbReference>
<dbReference type="RefSeq" id="WP_012278596.1">
    <property type="nucleotide sequence ID" value="NC_010334.1"/>
</dbReference>
<dbReference type="SMR" id="B0TTD5"/>
<dbReference type="STRING" id="458817.Shal_3533"/>
<dbReference type="KEGG" id="shl:Shal_3533"/>
<dbReference type="eggNOG" id="COG0175">
    <property type="taxonomic scope" value="Bacteria"/>
</dbReference>
<dbReference type="HOGENOM" id="CLU_043026_0_0_6"/>
<dbReference type="OrthoDB" id="9772604at2"/>
<dbReference type="UniPathway" id="UPA00140">
    <property type="reaction ID" value="UER00204"/>
</dbReference>
<dbReference type="Proteomes" id="UP000001317">
    <property type="component" value="Chromosome"/>
</dbReference>
<dbReference type="GO" id="GO:0005524">
    <property type="term" value="F:ATP binding"/>
    <property type="evidence" value="ECO:0007669"/>
    <property type="project" value="UniProtKB-KW"/>
</dbReference>
<dbReference type="GO" id="GO:0004781">
    <property type="term" value="F:sulfate adenylyltransferase (ATP) activity"/>
    <property type="evidence" value="ECO:0007669"/>
    <property type="project" value="UniProtKB-UniRule"/>
</dbReference>
<dbReference type="GO" id="GO:0070814">
    <property type="term" value="P:hydrogen sulfide biosynthetic process"/>
    <property type="evidence" value="ECO:0007669"/>
    <property type="project" value="UniProtKB-UniRule"/>
</dbReference>
<dbReference type="GO" id="GO:0000103">
    <property type="term" value="P:sulfate assimilation"/>
    <property type="evidence" value="ECO:0007669"/>
    <property type="project" value="UniProtKB-UniRule"/>
</dbReference>
<dbReference type="CDD" id="cd23946">
    <property type="entry name" value="Sulfate_adenylyltransferase_2"/>
    <property type="match status" value="1"/>
</dbReference>
<dbReference type="FunFam" id="3.40.50.620:FF:000002">
    <property type="entry name" value="Sulfate adenylyltransferase subunit 2"/>
    <property type="match status" value="1"/>
</dbReference>
<dbReference type="Gene3D" id="3.40.50.620">
    <property type="entry name" value="HUPs"/>
    <property type="match status" value="1"/>
</dbReference>
<dbReference type="HAMAP" id="MF_00064">
    <property type="entry name" value="Sulf_adenylyltr_sub2"/>
    <property type="match status" value="1"/>
</dbReference>
<dbReference type="InterPro" id="IPR002500">
    <property type="entry name" value="PAPS_reduct_dom"/>
</dbReference>
<dbReference type="InterPro" id="IPR014729">
    <property type="entry name" value="Rossmann-like_a/b/a_fold"/>
</dbReference>
<dbReference type="InterPro" id="IPR011784">
    <property type="entry name" value="SO4_adenylTrfase_ssu"/>
</dbReference>
<dbReference type="InterPro" id="IPR050128">
    <property type="entry name" value="Sulfate_adenylyltrnsfr_sub2"/>
</dbReference>
<dbReference type="NCBIfam" id="TIGR02039">
    <property type="entry name" value="CysD"/>
    <property type="match status" value="1"/>
</dbReference>
<dbReference type="NCBIfam" id="NF003587">
    <property type="entry name" value="PRK05253.1"/>
    <property type="match status" value="1"/>
</dbReference>
<dbReference type="NCBIfam" id="NF009214">
    <property type="entry name" value="PRK12563.1"/>
    <property type="match status" value="1"/>
</dbReference>
<dbReference type="PANTHER" id="PTHR43196">
    <property type="entry name" value="SULFATE ADENYLYLTRANSFERASE SUBUNIT 2"/>
    <property type="match status" value="1"/>
</dbReference>
<dbReference type="PANTHER" id="PTHR43196:SF1">
    <property type="entry name" value="SULFATE ADENYLYLTRANSFERASE SUBUNIT 2"/>
    <property type="match status" value="1"/>
</dbReference>
<dbReference type="Pfam" id="PF01507">
    <property type="entry name" value="PAPS_reduct"/>
    <property type="match status" value="1"/>
</dbReference>
<dbReference type="PIRSF" id="PIRSF002936">
    <property type="entry name" value="CysDAde_trans"/>
    <property type="match status" value="1"/>
</dbReference>
<dbReference type="SUPFAM" id="SSF52402">
    <property type="entry name" value="Adenine nucleotide alpha hydrolases-like"/>
    <property type="match status" value="1"/>
</dbReference>
<proteinExistence type="inferred from homology"/>
<feature type="chain" id="PRO_1000075083" description="Sulfate adenylyltransferase subunit 2">
    <location>
        <begin position="1"/>
        <end position="302"/>
    </location>
</feature>
<reference key="1">
    <citation type="submission" date="2008-01" db="EMBL/GenBank/DDBJ databases">
        <title>Complete sequence of Shewanella halifaxensis HAW-EB4.</title>
        <authorList>
            <consortium name="US DOE Joint Genome Institute"/>
            <person name="Copeland A."/>
            <person name="Lucas S."/>
            <person name="Lapidus A."/>
            <person name="Glavina del Rio T."/>
            <person name="Dalin E."/>
            <person name="Tice H."/>
            <person name="Bruce D."/>
            <person name="Goodwin L."/>
            <person name="Pitluck S."/>
            <person name="Sims D."/>
            <person name="Brettin T."/>
            <person name="Detter J.C."/>
            <person name="Han C."/>
            <person name="Kuske C.R."/>
            <person name="Schmutz J."/>
            <person name="Larimer F."/>
            <person name="Land M."/>
            <person name="Hauser L."/>
            <person name="Kyrpides N."/>
            <person name="Kim E."/>
            <person name="Zhao J.-S."/>
            <person name="Richardson P."/>
        </authorList>
    </citation>
    <scope>NUCLEOTIDE SEQUENCE [LARGE SCALE GENOMIC DNA]</scope>
    <source>
        <strain>HAW-EB4</strain>
    </source>
</reference>
<keyword id="KW-0067">ATP-binding</keyword>
<keyword id="KW-0547">Nucleotide-binding</keyword>
<keyword id="KW-0548">Nucleotidyltransferase</keyword>
<keyword id="KW-0808">Transferase</keyword>